<evidence type="ECO:0000250" key="1"/>
<evidence type="ECO:0000256" key="2">
    <source>
        <dbReference type="SAM" id="MobiDB-lite"/>
    </source>
</evidence>
<evidence type="ECO:0000305" key="3"/>
<feature type="chain" id="PRO_0000046527" description="DNA polymerase">
    <location>
        <begin position="1"/>
        <end position="986"/>
    </location>
</feature>
<feature type="region of interest" description="Disordered" evidence="2">
    <location>
        <begin position="804"/>
        <end position="824"/>
    </location>
</feature>
<feature type="region of interest" description="Disordered" evidence="2">
    <location>
        <begin position="944"/>
        <end position="969"/>
    </location>
</feature>
<feature type="compositionally biased region" description="Acidic residues" evidence="2">
    <location>
        <begin position="948"/>
        <end position="968"/>
    </location>
</feature>
<feature type="sequence conflict" description="In Ref. 1; BAA03756." evidence="3" ref="1">
    <original>A</original>
    <variation>S</variation>
    <location>
        <position position="116"/>
    </location>
</feature>
<feature type="sequence conflict" description="In Ref. 1; BAA03756." evidence="3" ref="1">
    <original>H</original>
    <variation>Y</variation>
    <location>
        <position position="245"/>
    </location>
</feature>
<feature type="sequence conflict" description="In Ref. 1; BAA03756." evidence="3" ref="1">
    <original>H</original>
    <variation>Y</variation>
    <location>
        <position position="250"/>
    </location>
</feature>
<feature type="sequence conflict" description="In Ref. 1; BAA03756." evidence="3" ref="1">
    <original>V</original>
    <variation>I</variation>
    <location>
        <position position="258"/>
    </location>
</feature>
<feature type="sequence conflict" description="In Ref. 1; BAA03756." evidence="3" ref="1">
    <original>TA</original>
    <variation>AG</variation>
    <location>
        <begin position="478"/>
        <end position="479"/>
    </location>
</feature>
<feature type="sequence conflict" description="In Ref. 1; BAA03756." evidence="3" ref="1">
    <original>S</original>
    <variation>G</variation>
    <location>
        <position position="941"/>
    </location>
</feature>
<feature type="sequence conflict" description="In Ref. 1." evidence="3" ref="1">
    <original>N</original>
    <variation>NDN</variation>
    <location>
        <position position="952"/>
    </location>
</feature>
<reference key="1">
    <citation type="journal article" date="1995" name="Virology">
        <title>Nucleotide sequence and transcriptional analysis of the DNA polymerase gene of Bombyx mori nuclear polyhedrosis virus.</title>
        <authorList>
            <person name="Chaeychomsri S."/>
            <person name="Ikeda M."/>
            <person name="Kobayashi M."/>
        </authorList>
    </citation>
    <scope>NUCLEOTIDE SEQUENCE [GENOMIC DNA]</scope>
</reference>
<reference key="2">
    <citation type="journal article" date="1999" name="J. Gen. Virol.">
        <title>Sequence analysis of the genome of Bombyx mori nucleopolyhedrovirus.</title>
        <authorList>
            <person name="Gomi S."/>
            <person name="Majima K."/>
            <person name="Maeda S."/>
        </authorList>
    </citation>
    <scope>NUCLEOTIDE SEQUENCE [LARGE SCALE GENOMIC DNA]</scope>
    <source>
        <strain>T3</strain>
    </source>
</reference>
<organismHost>
    <name type="scientific">Bombyx mori</name>
    <name type="common">Silk moth</name>
    <dbReference type="NCBI Taxonomy" id="7091"/>
</organismHost>
<comment type="function">
    <text evidence="1">Replicates the viral genome, host DNA polymerases cannot substitute for the viral enzyme in this process.</text>
</comment>
<comment type="catalytic activity">
    <reaction>
        <text>DNA(n) + a 2'-deoxyribonucleoside 5'-triphosphate = DNA(n+1) + diphosphate</text>
        <dbReference type="Rhea" id="RHEA:22508"/>
        <dbReference type="Rhea" id="RHEA-COMP:17339"/>
        <dbReference type="Rhea" id="RHEA-COMP:17340"/>
        <dbReference type="ChEBI" id="CHEBI:33019"/>
        <dbReference type="ChEBI" id="CHEBI:61560"/>
        <dbReference type="ChEBI" id="CHEBI:173112"/>
        <dbReference type="EC" id="2.7.7.7"/>
    </reaction>
</comment>
<comment type="similarity">
    <text evidence="3">Belongs to the DNA polymerase type-B family.</text>
</comment>
<gene>
    <name type="primary">POL</name>
</gene>
<proteinExistence type="inferred from homology"/>
<keyword id="KW-0235">DNA replication</keyword>
<keyword id="KW-0238">DNA-binding</keyword>
<keyword id="KW-0239">DNA-directed DNA polymerase</keyword>
<keyword id="KW-0244">Early protein</keyword>
<keyword id="KW-0548">Nucleotidyltransferase</keyword>
<keyword id="KW-0808">Transferase</keyword>
<keyword id="KW-1194">Viral DNA replication</keyword>
<protein>
    <recommendedName>
        <fullName>DNA polymerase</fullName>
        <ecNumber>2.7.7.7</ecNumber>
    </recommendedName>
</protein>
<accession>P41712</accession>
<accession>O92430</accession>
<sequence>MKIYSYNELKTRFAEYAKPGEFSITSADTFRIIRLHYDEKQGCLFAFCNTNIEKRVLQFYFKVKLNLYSYKQCYDKHIFPSCRNKCISYTTFVAPGVEGNCLNKINVIKYERNKAAPSDNAACLDKFLHNVNRVHMQTPFVEGAYMRFKKTQRCQNNYVGGSTTRMFNLQHFYEDFELVDEMTLTSGIMPVLSCYDIETHSDGHNMSKASVDCIMSIGFVVYKNDEYARFCFMYHKLPTEIPETHDDDTHVVMFQNEVDMITAFFDMIKITNPDVILDFNGDVFDLPYILGRLNKTKMLLKRYDLPAAAPTTKLFINKLGNKVDTYYFNYYIHIDLYKFFSSDSNQHKVENFQLNTISSYYLGENKIDLPWTEMVKMYNTRRLDVIAKYNVQDCMLPIKLFVKLKMADSVYSQCILHRLCTDDVICNISHLISVACFYAAITNTRINESTGKEEPDPYFFNKNDLSIISGQFNADKATAGISNLKRKLTPLKNIPKDAINLGPANQTVKYKGGKVLQPRASIYKNAFSLDFNSLYLTIMIAICACLSNLVLCEDGNVYLNHNSRAIVVKLLLKLLSERCKFKKNRDNQSESAFLYDLYDQKQNSVKRTANSIYGYYGIFYKVLANYITRVGRNQLRRAISLIEGLSNDPEILKKFNLNSIGFKVVYGDTDSTFVLPTFNYNEIFDETDTLKQICTHVETRVNSSFTDGYKMAFENLMKVLIILKKKKYCYLNSENKIVYKGWLVKKDMPVFMRIAFRTAVEQILRHLDINKCLQSLQASFYEYYDEFAKSKPMTDYSFSMTYNDNPGKKRKSADDNNEGPSPKRRVITVARHCREILVNKGTDFVPGNGDRIPYLLIDIEGKVTEKAYPLRLFDPVKMRISWIKHMGILCTFMNELLEIFGDEQKDNLAKCFTAIMQKYMQNQLYDRKEPVLVKINQKKCSVKRKRDDDDDNNDDDDDDGCDSSDSENDTQCANNTYKFCLYKIKK</sequence>
<dbReference type="EC" id="2.7.7.7"/>
<dbReference type="EMBL" id="D16231">
    <property type="protein sequence ID" value="BAA03756.1"/>
    <property type="molecule type" value="Genomic_DNA"/>
</dbReference>
<dbReference type="EMBL" id="L33180">
    <property type="protein sequence ID" value="AAC63738.1"/>
    <property type="molecule type" value="Genomic_DNA"/>
</dbReference>
<dbReference type="PIR" id="T41809">
    <property type="entry name" value="T41809"/>
</dbReference>
<dbReference type="RefSeq" id="NP_047469.1">
    <property type="nucleotide sequence ID" value="NC_001962.1"/>
</dbReference>
<dbReference type="SMR" id="P41712"/>
<dbReference type="KEGG" id="vg:1724484"/>
<dbReference type="OrthoDB" id="165at10239"/>
<dbReference type="Proteomes" id="UP000204315">
    <property type="component" value="Genome"/>
</dbReference>
<dbReference type="GO" id="GO:0003677">
    <property type="term" value="F:DNA binding"/>
    <property type="evidence" value="ECO:0007669"/>
    <property type="project" value="UniProtKB-KW"/>
</dbReference>
<dbReference type="GO" id="GO:0003887">
    <property type="term" value="F:DNA-directed DNA polymerase activity"/>
    <property type="evidence" value="ECO:0007669"/>
    <property type="project" value="UniProtKB-KW"/>
</dbReference>
<dbReference type="GO" id="GO:0000166">
    <property type="term" value="F:nucleotide binding"/>
    <property type="evidence" value="ECO:0007669"/>
    <property type="project" value="InterPro"/>
</dbReference>
<dbReference type="GO" id="GO:0006261">
    <property type="term" value="P:DNA-templated DNA replication"/>
    <property type="evidence" value="ECO:0007669"/>
    <property type="project" value="TreeGrafter"/>
</dbReference>
<dbReference type="GO" id="GO:0039693">
    <property type="term" value="P:viral DNA genome replication"/>
    <property type="evidence" value="ECO:0007669"/>
    <property type="project" value="UniProtKB-KW"/>
</dbReference>
<dbReference type="GO" id="GO:0019079">
    <property type="term" value="P:viral genome replication"/>
    <property type="evidence" value="ECO:0000250"/>
    <property type="project" value="UniProtKB"/>
</dbReference>
<dbReference type="FunFam" id="1.10.132.60:FF:000018">
    <property type="entry name" value="DNA polymerase"/>
    <property type="match status" value="1"/>
</dbReference>
<dbReference type="FunFam" id="1.10.287.690:FF:000010">
    <property type="entry name" value="DNA polymerase"/>
    <property type="match status" value="1"/>
</dbReference>
<dbReference type="FunFam" id="3.30.420.10:FF:000173">
    <property type="entry name" value="DNA polymerase"/>
    <property type="match status" value="1"/>
</dbReference>
<dbReference type="Gene3D" id="1.10.132.60">
    <property type="entry name" value="DNA polymerase family B, C-terminal domain"/>
    <property type="match status" value="1"/>
</dbReference>
<dbReference type="Gene3D" id="1.10.287.690">
    <property type="entry name" value="Helix hairpin bin"/>
    <property type="match status" value="1"/>
</dbReference>
<dbReference type="Gene3D" id="3.90.1600.10">
    <property type="entry name" value="Palm domain of DNA polymerase"/>
    <property type="match status" value="1"/>
</dbReference>
<dbReference type="Gene3D" id="3.30.420.10">
    <property type="entry name" value="Ribonuclease H-like superfamily/Ribonuclease H"/>
    <property type="match status" value="1"/>
</dbReference>
<dbReference type="InterPro" id="IPR006172">
    <property type="entry name" value="DNA-dir_DNA_pol_B"/>
</dbReference>
<dbReference type="InterPro" id="IPR017964">
    <property type="entry name" value="DNA-dir_DNA_pol_B_CS"/>
</dbReference>
<dbReference type="InterPro" id="IPR006133">
    <property type="entry name" value="DNA-dir_DNA_pol_B_exonuc"/>
</dbReference>
<dbReference type="InterPro" id="IPR006134">
    <property type="entry name" value="DNA-dir_DNA_pol_B_multi_dom"/>
</dbReference>
<dbReference type="InterPro" id="IPR043502">
    <property type="entry name" value="DNA/RNA_pol_sf"/>
</dbReference>
<dbReference type="InterPro" id="IPR042087">
    <property type="entry name" value="DNA_pol_B_thumb"/>
</dbReference>
<dbReference type="InterPro" id="IPR023211">
    <property type="entry name" value="DNA_pol_palm_dom_sf"/>
</dbReference>
<dbReference type="InterPro" id="IPR050240">
    <property type="entry name" value="DNA_pol_type-B"/>
</dbReference>
<dbReference type="InterPro" id="IPR012337">
    <property type="entry name" value="RNaseH-like_sf"/>
</dbReference>
<dbReference type="InterPro" id="IPR036397">
    <property type="entry name" value="RNaseH_sf"/>
</dbReference>
<dbReference type="PANTHER" id="PTHR10322">
    <property type="entry name" value="DNA POLYMERASE CATALYTIC SUBUNIT"/>
    <property type="match status" value="1"/>
</dbReference>
<dbReference type="PANTHER" id="PTHR10322:SF23">
    <property type="entry name" value="DNA POLYMERASE DELTA CATALYTIC SUBUNIT"/>
    <property type="match status" value="1"/>
</dbReference>
<dbReference type="Pfam" id="PF00136">
    <property type="entry name" value="DNA_pol_B"/>
    <property type="match status" value="1"/>
</dbReference>
<dbReference type="Pfam" id="PF03104">
    <property type="entry name" value="DNA_pol_B_exo1"/>
    <property type="match status" value="1"/>
</dbReference>
<dbReference type="PRINTS" id="PR00106">
    <property type="entry name" value="DNAPOLB"/>
</dbReference>
<dbReference type="SMART" id="SM00486">
    <property type="entry name" value="POLBc"/>
    <property type="match status" value="1"/>
</dbReference>
<dbReference type="SUPFAM" id="SSF56672">
    <property type="entry name" value="DNA/RNA polymerases"/>
    <property type="match status" value="1"/>
</dbReference>
<dbReference type="SUPFAM" id="SSF53098">
    <property type="entry name" value="Ribonuclease H-like"/>
    <property type="match status" value="1"/>
</dbReference>
<dbReference type="PROSITE" id="PS00116">
    <property type="entry name" value="DNA_POLYMERASE_B"/>
    <property type="match status" value="1"/>
</dbReference>
<organism>
    <name type="scientific">Bombyx mori nuclear polyhedrosis virus</name>
    <name type="common">BmNPV</name>
    <dbReference type="NCBI Taxonomy" id="271108"/>
    <lineage>
        <taxon>Viruses</taxon>
        <taxon>Viruses incertae sedis</taxon>
        <taxon>Naldaviricetes</taxon>
        <taxon>Lefavirales</taxon>
        <taxon>Baculoviridae</taxon>
        <taxon>Alphabaculovirus</taxon>
        <taxon>Alphabaculovirus bomori</taxon>
    </lineage>
</organism>
<name>DPOL_NPVBM</name>